<name>CYAY_YERPA</name>
<evidence type="ECO:0000255" key="1">
    <source>
        <dbReference type="HAMAP-Rule" id="MF_00142"/>
    </source>
</evidence>
<gene>
    <name evidence="1" type="primary">cyaY</name>
    <name type="ordered locus">YPA_0175</name>
</gene>
<sequence length="106" mass="11904">MNDSEFHQLADQLMLYIEETLDSFTGDSDIDYETNGGVMTLTFENGSKIVINRQEPLHQVWLATKAGGYHFNYRDGHWYCSRSGEEFLAKLSEAASAQAGENVSFG</sequence>
<keyword id="KW-0408">Iron</keyword>
<keyword id="KW-0479">Metal-binding</keyword>
<comment type="function">
    <text evidence="1">Involved in iron-sulfur (Fe-S) cluster assembly. May act as a regulator of Fe-S biogenesis.</text>
</comment>
<comment type="similarity">
    <text evidence="1">Belongs to the frataxin family.</text>
</comment>
<dbReference type="EMBL" id="CP000308">
    <property type="protein sequence ID" value="ABG12144.1"/>
    <property type="molecule type" value="Genomic_DNA"/>
</dbReference>
<dbReference type="RefSeq" id="WP_002211469.1">
    <property type="nucleotide sequence ID" value="NZ_CP009906.1"/>
</dbReference>
<dbReference type="SMR" id="Q1CBM8"/>
<dbReference type="GeneID" id="57974862"/>
<dbReference type="KEGG" id="ypa:YPA_0175"/>
<dbReference type="Proteomes" id="UP000001971">
    <property type="component" value="Chromosome"/>
</dbReference>
<dbReference type="GO" id="GO:0005829">
    <property type="term" value="C:cytosol"/>
    <property type="evidence" value="ECO:0007669"/>
    <property type="project" value="TreeGrafter"/>
</dbReference>
<dbReference type="GO" id="GO:0008199">
    <property type="term" value="F:ferric iron binding"/>
    <property type="evidence" value="ECO:0007669"/>
    <property type="project" value="InterPro"/>
</dbReference>
<dbReference type="GO" id="GO:0008198">
    <property type="term" value="F:ferrous iron binding"/>
    <property type="evidence" value="ECO:0007669"/>
    <property type="project" value="TreeGrafter"/>
</dbReference>
<dbReference type="GO" id="GO:0016226">
    <property type="term" value="P:iron-sulfur cluster assembly"/>
    <property type="evidence" value="ECO:0007669"/>
    <property type="project" value="UniProtKB-UniRule"/>
</dbReference>
<dbReference type="CDD" id="cd00503">
    <property type="entry name" value="Frataxin"/>
    <property type="match status" value="1"/>
</dbReference>
<dbReference type="FunFam" id="3.30.920.10:FF:000001">
    <property type="entry name" value="Iron-sulfur cluster assembly protein CyaY"/>
    <property type="match status" value="1"/>
</dbReference>
<dbReference type="Gene3D" id="3.30.920.10">
    <property type="entry name" value="Frataxin/CyaY"/>
    <property type="match status" value="1"/>
</dbReference>
<dbReference type="HAMAP" id="MF_00142">
    <property type="entry name" value="CyaY"/>
    <property type="match status" value="1"/>
</dbReference>
<dbReference type="InterPro" id="IPR047584">
    <property type="entry name" value="CyaY"/>
</dbReference>
<dbReference type="InterPro" id="IPR002908">
    <property type="entry name" value="Frataxin/CyaY"/>
</dbReference>
<dbReference type="InterPro" id="IPR036524">
    <property type="entry name" value="Frataxin/CyaY_sf"/>
</dbReference>
<dbReference type="InterPro" id="IPR020895">
    <property type="entry name" value="Frataxin_CS"/>
</dbReference>
<dbReference type="NCBIfam" id="TIGR03421">
    <property type="entry name" value="FeS_CyaY"/>
    <property type="match status" value="1"/>
</dbReference>
<dbReference type="PANTHER" id="PTHR16821">
    <property type="entry name" value="FRATAXIN"/>
    <property type="match status" value="1"/>
</dbReference>
<dbReference type="PANTHER" id="PTHR16821:SF2">
    <property type="entry name" value="FRATAXIN, MITOCHONDRIAL"/>
    <property type="match status" value="1"/>
</dbReference>
<dbReference type="Pfam" id="PF01491">
    <property type="entry name" value="Frataxin_Cyay"/>
    <property type="match status" value="1"/>
</dbReference>
<dbReference type="SMART" id="SM01219">
    <property type="entry name" value="Frataxin_Cyay"/>
    <property type="match status" value="1"/>
</dbReference>
<dbReference type="SUPFAM" id="SSF55387">
    <property type="entry name" value="Frataxin/Nqo15-like"/>
    <property type="match status" value="1"/>
</dbReference>
<dbReference type="PROSITE" id="PS01344">
    <property type="entry name" value="FRATAXIN_1"/>
    <property type="match status" value="1"/>
</dbReference>
<dbReference type="PROSITE" id="PS50810">
    <property type="entry name" value="FRATAXIN_2"/>
    <property type="match status" value="1"/>
</dbReference>
<reference key="1">
    <citation type="journal article" date="2006" name="J. Bacteriol.">
        <title>Complete genome sequence of Yersinia pestis strains Antiqua and Nepal516: evidence of gene reduction in an emerging pathogen.</title>
        <authorList>
            <person name="Chain P.S.G."/>
            <person name="Hu P."/>
            <person name="Malfatti S.A."/>
            <person name="Radnedge L."/>
            <person name="Larimer F."/>
            <person name="Vergez L.M."/>
            <person name="Worsham P."/>
            <person name="Chu M.C."/>
            <person name="Andersen G.L."/>
        </authorList>
    </citation>
    <scope>NUCLEOTIDE SEQUENCE [LARGE SCALE GENOMIC DNA]</scope>
    <source>
        <strain>Antiqua</strain>
    </source>
</reference>
<accession>Q1CBM8</accession>
<protein>
    <recommendedName>
        <fullName evidence="1">Iron-sulfur cluster assembly protein CyaY</fullName>
    </recommendedName>
</protein>
<organism>
    <name type="scientific">Yersinia pestis bv. Antiqua (strain Antiqua)</name>
    <dbReference type="NCBI Taxonomy" id="360102"/>
    <lineage>
        <taxon>Bacteria</taxon>
        <taxon>Pseudomonadati</taxon>
        <taxon>Pseudomonadota</taxon>
        <taxon>Gammaproteobacteria</taxon>
        <taxon>Enterobacterales</taxon>
        <taxon>Yersiniaceae</taxon>
        <taxon>Yersinia</taxon>
    </lineage>
</organism>
<feature type="chain" id="PRO_1000010967" description="Iron-sulfur cluster assembly protein CyaY">
    <location>
        <begin position="1"/>
        <end position="106"/>
    </location>
</feature>
<proteinExistence type="inferred from homology"/>